<proteinExistence type="inferred from homology"/>
<feature type="chain" id="PRO_1000125199" description="Sec-independent protein translocase protein TatA">
    <location>
        <begin position="1"/>
        <end position="76"/>
    </location>
</feature>
<feature type="transmembrane region" description="Helical" evidence="1">
    <location>
        <begin position="1"/>
        <end position="21"/>
    </location>
</feature>
<feature type="region of interest" description="Disordered" evidence="2">
    <location>
        <begin position="40"/>
        <end position="76"/>
    </location>
</feature>
<feature type="compositionally biased region" description="Basic and acidic residues" evidence="2">
    <location>
        <begin position="64"/>
        <end position="76"/>
    </location>
</feature>
<evidence type="ECO:0000255" key="1">
    <source>
        <dbReference type="HAMAP-Rule" id="MF_00236"/>
    </source>
</evidence>
<evidence type="ECO:0000256" key="2">
    <source>
        <dbReference type="SAM" id="MobiDB-lite"/>
    </source>
</evidence>
<name>TATA_BURA4</name>
<gene>
    <name evidence="1" type="primary">tatA</name>
    <name type="ordered locus">BamMC406_0363</name>
</gene>
<comment type="function">
    <text evidence="1">Part of the twin-arginine translocation (Tat) system that transports large folded proteins containing a characteristic twin-arginine motif in their signal peptide across membranes. TatA could form the protein-conducting channel of the Tat system.</text>
</comment>
<comment type="subunit">
    <text evidence="1">The Tat system comprises two distinct complexes: a TatABC complex, containing multiple copies of TatA, TatB and TatC subunits, and a separate TatA complex, containing only TatA subunits. Substrates initially bind to the TatABC complex, which probably triggers association of the separate TatA complex to form the active translocon.</text>
</comment>
<comment type="subcellular location">
    <subcellularLocation>
        <location evidence="1">Cell inner membrane</location>
        <topology evidence="1">Single-pass membrane protein</topology>
    </subcellularLocation>
</comment>
<comment type="similarity">
    <text evidence="1">Belongs to the TatA/E family.</text>
</comment>
<organism>
    <name type="scientific">Burkholderia ambifaria (strain MC40-6)</name>
    <dbReference type="NCBI Taxonomy" id="398577"/>
    <lineage>
        <taxon>Bacteria</taxon>
        <taxon>Pseudomonadati</taxon>
        <taxon>Pseudomonadota</taxon>
        <taxon>Betaproteobacteria</taxon>
        <taxon>Burkholderiales</taxon>
        <taxon>Burkholderiaceae</taxon>
        <taxon>Burkholderia</taxon>
        <taxon>Burkholderia cepacia complex</taxon>
    </lineage>
</organism>
<dbReference type="EMBL" id="CP001025">
    <property type="protein sequence ID" value="ACB62864.1"/>
    <property type="molecule type" value="Genomic_DNA"/>
</dbReference>
<dbReference type="RefSeq" id="WP_006751795.1">
    <property type="nucleotide sequence ID" value="NC_010551.1"/>
</dbReference>
<dbReference type="SMR" id="B1YRW6"/>
<dbReference type="GeneID" id="93084232"/>
<dbReference type="KEGG" id="bac:BamMC406_0363"/>
<dbReference type="HOGENOM" id="CLU_086034_5_3_4"/>
<dbReference type="OrthoDB" id="7066617at2"/>
<dbReference type="Proteomes" id="UP000001680">
    <property type="component" value="Chromosome 1"/>
</dbReference>
<dbReference type="GO" id="GO:0033281">
    <property type="term" value="C:TAT protein transport complex"/>
    <property type="evidence" value="ECO:0007669"/>
    <property type="project" value="UniProtKB-UniRule"/>
</dbReference>
<dbReference type="GO" id="GO:0008320">
    <property type="term" value="F:protein transmembrane transporter activity"/>
    <property type="evidence" value="ECO:0007669"/>
    <property type="project" value="UniProtKB-UniRule"/>
</dbReference>
<dbReference type="GO" id="GO:0043953">
    <property type="term" value="P:protein transport by the Tat complex"/>
    <property type="evidence" value="ECO:0007669"/>
    <property type="project" value="UniProtKB-UniRule"/>
</dbReference>
<dbReference type="Gene3D" id="1.20.5.3310">
    <property type="match status" value="1"/>
</dbReference>
<dbReference type="HAMAP" id="MF_00236">
    <property type="entry name" value="TatA_E"/>
    <property type="match status" value="1"/>
</dbReference>
<dbReference type="InterPro" id="IPR003369">
    <property type="entry name" value="TatA/B/E"/>
</dbReference>
<dbReference type="InterPro" id="IPR006312">
    <property type="entry name" value="TatA/E"/>
</dbReference>
<dbReference type="NCBIfam" id="NF002813">
    <property type="entry name" value="PRK02958.1"/>
    <property type="match status" value="1"/>
</dbReference>
<dbReference type="NCBIfam" id="TIGR01411">
    <property type="entry name" value="tatAE"/>
    <property type="match status" value="1"/>
</dbReference>
<dbReference type="PANTHER" id="PTHR42982">
    <property type="entry name" value="SEC-INDEPENDENT PROTEIN TRANSLOCASE PROTEIN TATA"/>
    <property type="match status" value="1"/>
</dbReference>
<dbReference type="PANTHER" id="PTHR42982:SF1">
    <property type="entry name" value="SEC-INDEPENDENT PROTEIN TRANSLOCASE PROTEIN TATA"/>
    <property type="match status" value="1"/>
</dbReference>
<dbReference type="Pfam" id="PF02416">
    <property type="entry name" value="TatA_B_E"/>
    <property type="match status" value="1"/>
</dbReference>
<sequence length="76" mass="8167">MGGLSIWHWLIVLLIVALVFGTKKLRNIGNDLGSAVKGFKDGMKEGETPADAQQLPRTGTVDVNAKETTRSDSNKA</sequence>
<accession>B1YRW6</accession>
<reference key="1">
    <citation type="submission" date="2008-04" db="EMBL/GenBank/DDBJ databases">
        <title>Complete sequence of chromosome 1 of Burkholderia ambifaria MC40-6.</title>
        <authorList>
            <person name="Copeland A."/>
            <person name="Lucas S."/>
            <person name="Lapidus A."/>
            <person name="Glavina del Rio T."/>
            <person name="Dalin E."/>
            <person name="Tice H."/>
            <person name="Pitluck S."/>
            <person name="Chain P."/>
            <person name="Malfatti S."/>
            <person name="Shin M."/>
            <person name="Vergez L."/>
            <person name="Lang D."/>
            <person name="Schmutz J."/>
            <person name="Larimer F."/>
            <person name="Land M."/>
            <person name="Hauser L."/>
            <person name="Kyrpides N."/>
            <person name="Lykidis A."/>
            <person name="Ramette A."/>
            <person name="Konstantinidis K."/>
            <person name="Tiedje J."/>
            <person name="Richardson P."/>
        </authorList>
    </citation>
    <scope>NUCLEOTIDE SEQUENCE [LARGE SCALE GENOMIC DNA]</scope>
    <source>
        <strain>MC40-6</strain>
    </source>
</reference>
<keyword id="KW-0997">Cell inner membrane</keyword>
<keyword id="KW-1003">Cell membrane</keyword>
<keyword id="KW-0472">Membrane</keyword>
<keyword id="KW-0653">Protein transport</keyword>
<keyword id="KW-0811">Translocation</keyword>
<keyword id="KW-0812">Transmembrane</keyword>
<keyword id="KW-1133">Transmembrane helix</keyword>
<keyword id="KW-0813">Transport</keyword>
<protein>
    <recommendedName>
        <fullName evidence="1">Sec-independent protein translocase protein TatA</fullName>
    </recommendedName>
</protein>